<sequence>MSNSLSNTVPPDLSAQPENPGEWPKSDFNCATIKALIDAFQRWLGEAFDSGIAAERLIEARTEFIDQLLQRLWVEYGFGSINDIALVAVGGYGRGELHPLSDIDLLILSRKKLPDEQAQKVGERLALLWDIKLEVGHSVRTLEECLLEGLSDLSVATNLIESRLLIGDVALFLELQKHIFSDGFWPSEKFFAAKVEEQNDRHQRYHGTSYNLEPDVKSSPGGLRDIHTLQWIARRHFGATSLDEMVGFGFLTEAERNELNECLHQLWRIRFALHLELNRYDNRLLFDRQFSVARRLRYEGESNQPIEHMMKDFFRVTRRVSELNQMLIQLFEEAILALTEDEKPRPIDDDFQLRGTLIDLRDDTLFIREPQAILRMFYTMVRNSSITGIYSTTVRHLRHARRHLTQPLCYIPEARTLFLSMLRHQGGLSRGLLPMHRHSVLWAYMPQWSHIVGQMQFDLFHAYTVDEHTIRVLLKLESFAKEETRSRHPLWLELWPRLTHPELILIAALFHDIAKGAGGDHSILGAQDVLKFAELHGLNCAQTQLVAWLVRHQLLMSVTAQRRDIQDPEVIKQFAEEVQTENRLHYLVCLTVADICATNENLWNSWKQSLLRELYFATEKQLRRGMQNTPDMRERVRHHQLQALALLRMENINEQALHQIWNRCRANYFVRHTPNQLAWHARNLLKHDLSKPMILLSSHATRGGTEIFIWSPDRPYLFAAVSAELDRRNLSVHDAQIFTTRDGMAMDTFIVLEPDGSPLSADRTQMIRVGLEQTLSQRSWQPPAPRRQAAKLRHFSVPTEVNFLPTHTDRKSFLELIALDQPGLLARVGQVFADLGISLHGARITTIGERVEDLFIIATADRRALNNELQQEVQQRLTEALNPNDKG</sequence>
<protein>
    <recommendedName>
        <fullName evidence="1">Bifunctional uridylyltransferase/uridylyl-removing enzyme</fullName>
        <shortName evidence="1">UTase/UR</shortName>
    </recommendedName>
    <alternativeName>
        <fullName evidence="1">Bifunctional [protein-PII] modification enzyme</fullName>
    </alternativeName>
    <alternativeName>
        <fullName evidence="1">Bifunctional nitrogen sensor protein</fullName>
    </alternativeName>
    <domain>
        <recommendedName>
            <fullName evidence="1">[Protein-PII] uridylyltransferase</fullName>
            <shortName evidence="1">PII uridylyltransferase</shortName>
            <shortName evidence="1">UTase</shortName>
            <ecNumber evidence="1">2.7.7.59</ecNumber>
        </recommendedName>
    </domain>
    <domain>
        <recommendedName>
            <fullName evidence="1">[Protein-PII]-UMP uridylyl-removing enzyme</fullName>
            <shortName evidence="1">UR</shortName>
            <ecNumber evidence="1">3.1.4.-</ecNumber>
        </recommendedName>
    </domain>
</protein>
<keyword id="KW-0378">Hydrolase</keyword>
<keyword id="KW-0460">Magnesium</keyword>
<keyword id="KW-0511">Multifunctional enzyme</keyword>
<keyword id="KW-0535">Nitrogen fixation</keyword>
<keyword id="KW-0548">Nucleotidyltransferase</keyword>
<keyword id="KW-0677">Repeat</keyword>
<keyword id="KW-0808">Transferase</keyword>
<organism>
    <name type="scientific">Klebsiella oxytoca</name>
    <dbReference type="NCBI Taxonomy" id="571"/>
    <lineage>
        <taxon>Bacteria</taxon>
        <taxon>Pseudomonadati</taxon>
        <taxon>Pseudomonadota</taxon>
        <taxon>Gammaproteobacteria</taxon>
        <taxon>Enterobacterales</taxon>
        <taxon>Enterobacteriaceae</taxon>
        <taxon>Klebsiella/Raoultella group</taxon>
        <taxon>Klebsiella</taxon>
    </lineage>
</organism>
<evidence type="ECO:0000255" key="1">
    <source>
        <dbReference type="HAMAP-Rule" id="MF_00277"/>
    </source>
</evidence>
<evidence type="ECO:0000255" key="2">
    <source>
        <dbReference type="PROSITE-ProRule" id="PRU01175"/>
    </source>
</evidence>
<evidence type="ECO:0000256" key="3">
    <source>
        <dbReference type="SAM" id="MobiDB-lite"/>
    </source>
</evidence>
<evidence type="ECO:0000269" key="4">
    <source>
    </source>
</evidence>
<evidence type="ECO:0000305" key="5">
    <source>
    </source>
</evidence>
<accession>P41393</accession>
<gene>
    <name evidence="1" type="primary">glnD</name>
</gene>
<comment type="function">
    <text evidence="5">Modifies, by uridylylation and deuridylylation, the PII regulatory proteins (GlnB and homologs), in response to the nitrogen status of the cell that GlnD senses through the glutamine level. Under low glutamine levels, catalyzes the conversion of the PII proteins and UTP to PII-UMP and PPi, while under higher glutamine levels, GlnD hydrolyzes PII-UMP to PII and UMP (deuridylylation). Thus, controls uridylylation state and activity of the PII proteins, and plays an important role in the regulation of nitrogen fixation and metabolism (Probable).</text>
</comment>
<comment type="catalytic activity">
    <reaction evidence="1">
        <text>[protein-PII]-L-tyrosine + UTP = [protein-PII]-uridylyl-L-tyrosine + diphosphate</text>
        <dbReference type="Rhea" id="RHEA:13673"/>
        <dbReference type="Rhea" id="RHEA-COMP:12147"/>
        <dbReference type="Rhea" id="RHEA-COMP:12148"/>
        <dbReference type="ChEBI" id="CHEBI:33019"/>
        <dbReference type="ChEBI" id="CHEBI:46398"/>
        <dbReference type="ChEBI" id="CHEBI:46858"/>
        <dbReference type="ChEBI" id="CHEBI:90602"/>
        <dbReference type="EC" id="2.7.7.59"/>
    </reaction>
</comment>
<comment type="catalytic activity">
    <reaction evidence="1">
        <text>[protein-PII]-uridylyl-L-tyrosine + H2O = [protein-PII]-L-tyrosine + UMP + H(+)</text>
        <dbReference type="Rhea" id="RHEA:48600"/>
        <dbReference type="Rhea" id="RHEA-COMP:12147"/>
        <dbReference type="Rhea" id="RHEA-COMP:12148"/>
        <dbReference type="ChEBI" id="CHEBI:15377"/>
        <dbReference type="ChEBI" id="CHEBI:15378"/>
        <dbReference type="ChEBI" id="CHEBI:46858"/>
        <dbReference type="ChEBI" id="CHEBI:57865"/>
        <dbReference type="ChEBI" id="CHEBI:90602"/>
    </reaction>
</comment>
<comment type="cofactor">
    <cofactor evidence="1">
        <name>Mg(2+)</name>
        <dbReference type="ChEBI" id="CHEBI:18420"/>
    </cofactor>
</comment>
<comment type="activity regulation">
    <text evidence="1">Uridylyltransferase (UTase) activity is inhibited by glutamine, while glutamine activates uridylyl-removing (UR) activity.</text>
</comment>
<comment type="domain">
    <text evidence="1">Has four distinct domains: an N-terminal nucleotidyltransferase (NT) domain responsible for UTase activity, a central HD domain that encodes UR activity, and two C-terminal ACT domains that seem to have a role in glutamine sensing.</text>
</comment>
<comment type="disruption phenotype">
    <text evidence="4">Cells lacking this gene are unable to uridylylate PII and are altered in adenylation/deadenylation of glutamine synthetase.</text>
</comment>
<comment type="similarity">
    <text evidence="1">Belongs to the GlnD family.</text>
</comment>
<dbReference type="EC" id="2.7.7.59" evidence="1"/>
<dbReference type="EC" id="3.1.4.-" evidence="1"/>
<dbReference type="EMBL" id="X78685">
    <property type="protein sequence ID" value="CAA55353.1"/>
    <property type="molecule type" value="Genomic_DNA"/>
</dbReference>
<dbReference type="PIR" id="S54756">
    <property type="entry name" value="S43196"/>
</dbReference>
<dbReference type="SMR" id="P41393"/>
<dbReference type="STRING" id="571.AB185_31015"/>
<dbReference type="eggNOG" id="COG2844">
    <property type="taxonomic scope" value="Bacteria"/>
</dbReference>
<dbReference type="GO" id="GO:0008773">
    <property type="term" value="F:[protein-PII] uridylyltransferase activity"/>
    <property type="evidence" value="ECO:0007669"/>
    <property type="project" value="UniProtKB-UniRule"/>
</dbReference>
<dbReference type="GO" id="GO:0008081">
    <property type="term" value="F:phosphoric diester hydrolase activity"/>
    <property type="evidence" value="ECO:0007669"/>
    <property type="project" value="UniProtKB-UniRule"/>
</dbReference>
<dbReference type="GO" id="GO:0009399">
    <property type="term" value="P:nitrogen fixation"/>
    <property type="evidence" value="ECO:0007669"/>
    <property type="project" value="UniProtKB-KW"/>
</dbReference>
<dbReference type="GO" id="GO:0006808">
    <property type="term" value="P:regulation of nitrogen utilization"/>
    <property type="evidence" value="ECO:0007669"/>
    <property type="project" value="UniProtKB-UniRule"/>
</dbReference>
<dbReference type="CDD" id="cd04899">
    <property type="entry name" value="ACT_ACR-UUR-like_2"/>
    <property type="match status" value="1"/>
</dbReference>
<dbReference type="CDD" id="cd04900">
    <property type="entry name" value="ACT_UUR-like_1"/>
    <property type="match status" value="1"/>
</dbReference>
<dbReference type="CDD" id="cd00077">
    <property type="entry name" value="HDc"/>
    <property type="match status" value="1"/>
</dbReference>
<dbReference type="CDD" id="cd05401">
    <property type="entry name" value="NT_GlnE_GlnD_like"/>
    <property type="match status" value="1"/>
</dbReference>
<dbReference type="FunFam" id="1.10.3210.10:FF:000005">
    <property type="entry name" value="Bifunctional uridylyltransferase/uridylyl-removing enzyme"/>
    <property type="match status" value="1"/>
</dbReference>
<dbReference type="Gene3D" id="1.10.3210.10">
    <property type="entry name" value="Hypothetical protein af1432"/>
    <property type="match status" value="1"/>
</dbReference>
<dbReference type="HAMAP" id="MF_00277">
    <property type="entry name" value="PII_uridylyl_transf"/>
    <property type="match status" value="1"/>
</dbReference>
<dbReference type="InterPro" id="IPR045865">
    <property type="entry name" value="ACT-like_dom_sf"/>
</dbReference>
<dbReference type="InterPro" id="IPR002912">
    <property type="entry name" value="ACT_dom"/>
</dbReference>
<dbReference type="InterPro" id="IPR003607">
    <property type="entry name" value="HD/PDEase_dom"/>
</dbReference>
<dbReference type="InterPro" id="IPR006674">
    <property type="entry name" value="HD_domain"/>
</dbReference>
<dbReference type="InterPro" id="IPR043519">
    <property type="entry name" value="NT_sf"/>
</dbReference>
<dbReference type="InterPro" id="IPR013546">
    <property type="entry name" value="PII_UdlTrfase/GS_AdlTrfase"/>
</dbReference>
<dbReference type="InterPro" id="IPR002934">
    <property type="entry name" value="Polymerase_NTP_transf_dom"/>
</dbReference>
<dbReference type="InterPro" id="IPR010043">
    <property type="entry name" value="UTase/UR"/>
</dbReference>
<dbReference type="NCBIfam" id="NF002487">
    <property type="entry name" value="PRK01759.1"/>
    <property type="match status" value="1"/>
</dbReference>
<dbReference type="NCBIfam" id="NF003448">
    <property type="entry name" value="PRK05007.1"/>
    <property type="match status" value="1"/>
</dbReference>
<dbReference type="NCBIfam" id="TIGR01693">
    <property type="entry name" value="UTase_glnD"/>
    <property type="match status" value="1"/>
</dbReference>
<dbReference type="PANTHER" id="PTHR47320">
    <property type="entry name" value="BIFUNCTIONAL URIDYLYLTRANSFERASE/URIDYLYL-REMOVING ENZYME"/>
    <property type="match status" value="1"/>
</dbReference>
<dbReference type="PANTHER" id="PTHR47320:SF1">
    <property type="entry name" value="BIFUNCTIONAL URIDYLYLTRANSFERASE_URIDYLYL-REMOVING ENZYME"/>
    <property type="match status" value="1"/>
</dbReference>
<dbReference type="Pfam" id="PF01842">
    <property type="entry name" value="ACT"/>
    <property type="match status" value="2"/>
</dbReference>
<dbReference type="Pfam" id="PF08335">
    <property type="entry name" value="GlnD_UR_UTase"/>
    <property type="match status" value="1"/>
</dbReference>
<dbReference type="Pfam" id="PF01966">
    <property type="entry name" value="HD"/>
    <property type="match status" value="1"/>
</dbReference>
<dbReference type="Pfam" id="PF01909">
    <property type="entry name" value="NTP_transf_2"/>
    <property type="match status" value="1"/>
</dbReference>
<dbReference type="PIRSF" id="PIRSF006288">
    <property type="entry name" value="PII_uridyltransf"/>
    <property type="match status" value="1"/>
</dbReference>
<dbReference type="SMART" id="SM00471">
    <property type="entry name" value="HDc"/>
    <property type="match status" value="1"/>
</dbReference>
<dbReference type="SUPFAM" id="SSF55021">
    <property type="entry name" value="ACT-like"/>
    <property type="match status" value="2"/>
</dbReference>
<dbReference type="SUPFAM" id="SSF109604">
    <property type="entry name" value="HD-domain/PDEase-like"/>
    <property type="match status" value="1"/>
</dbReference>
<dbReference type="SUPFAM" id="SSF81301">
    <property type="entry name" value="Nucleotidyltransferase"/>
    <property type="match status" value="1"/>
</dbReference>
<dbReference type="SUPFAM" id="SSF81593">
    <property type="entry name" value="Nucleotidyltransferase substrate binding subunit/domain"/>
    <property type="match status" value="1"/>
</dbReference>
<dbReference type="SUPFAM" id="SSF81891">
    <property type="entry name" value="Poly A polymerase C-terminal region-like"/>
    <property type="match status" value="1"/>
</dbReference>
<dbReference type="PROSITE" id="PS51671">
    <property type="entry name" value="ACT"/>
    <property type="match status" value="2"/>
</dbReference>
<dbReference type="PROSITE" id="PS51831">
    <property type="entry name" value="HD"/>
    <property type="match status" value="1"/>
</dbReference>
<proteinExistence type="inferred from homology"/>
<feature type="chain" id="PRO_0000192739" description="Bifunctional uridylyltransferase/uridylyl-removing enzyme">
    <location>
        <begin position="1"/>
        <end position="887"/>
    </location>
</feature>
<feature type="domain" description="HD" evidence="2">
    <location>
        <begin position="465"/>
        <end position="587"/>
    </location>
</feature>
<feature type="domain" description="ACT 1" evidence="1">
    <location>
        <begin position="706"/>
        <end position="786"/>
    </location>
</feature>
<feature type="domain" description="ACT 2" evidence="1">
    <location>
        <begin position="813"/>
        <end position="887"/>
    </location>
</feature>
<feature type="region of interest" description="Uridylyltransferase">
    <location>
        <begin position="1"/>
        <end position="346"/>
    </location>
</feature>
<feature type="region of interest" description="Disordered" evidence="3">
    <location>
        <begin position="1"/>
        <end position="24"/>
    </location>
</feature>
<feature type="region of interest" description="Uridylyl-removing">
    <location>
        <begin position="347"/>
        <end position="705"/>
    </location>
</feature>
<name>GLND_KLEOX</name>
<reference key="1">
    <citation type="journal article" date="1995" name="Mol. Gen. Genet.">
        <title>The role of uridylyltransferase in the control of Klebsiella pneumoniae nif gene regulation.</title>
        <authorList>
            <person name="Edwards R.A."/>
            <person name="Merrick M.J."/>
        </authorList>
    </citation>
    <scope>NUCLEOTIDE SEQUENCE [GENOMIC DNA]</scope>
    <scope>FUNCTION</scope>
    <scope>DISRUPTION PHENOTYPE</scope>
    <source>
        <strain>M5a1</strain>
    </source>
</reference>